<proteinExistence type="inferred from homology"/>
<reference key="1">
    <citation type="journal article" date="2008" name="PLoS Genet.">
        <title>Complete genome sequence of the N2-fixing broad host range endophyte Klebsiella pneumoniae 342 and virulence predictions verified in mice.</title>
        <authorList>
            <person name="Fouts D.E."/>
            <person name="Tyler H.L."/>
            <person name="DeBoy R.T."/>
            <person name="Daugherty S."/>
            <person name="Ren Q."/>
            <person name="Badger J.H."/>
            <person name="Durkin A.S."/>
            <person name="Huot H."/>
            <person name="Shrivastava S."/>
            <person name="Kothari S."/>
            <person name="Dodson R.J."/>
            <person name="Mohamoud Y."/>
            <person name="Khouri H."/>
            <person name="Roesch L.F.W."/>
            <person name="Krogfelt K.A."/>
            <person name="Struve C."/>
            <person name="Triplett E.W."/>
            <person name="Methe B.A."/>
        </authorList>
    </citation>
    <scope>NUCLEOTIDE SEQUENCE [LARGE SCALE GENOMIC DNA]</scope>
    <source>
        <strain>342</strain>
    </source>
</reference>
<sequence length="149" mass="15752">MQVILLDKVANLGSLGDQVNVKAGYARNFLVPQGKAVPATKKNVEFFEARRAELEAKLADVLSAAEARAAQINALESVTIASKAGDEGKLFGSIGTRDIADAVTAAGVKVAKSEVRLPNGVLRNVGEHEVDFQVHSEVFAKVIINVVAE</sequence>
<keyword id="KW-0687">Ribonucleoprotein</keyword>
<keyword id="KW-0689">Ribosomal protein</keyword>
<keyword id="KW-0694">RNA-binding</keyword>
<keyword id="KW-0699">rRNA-binding</keyword>
<organism>
    <name type="scientific">Klebsiella pneumoniae (strain 342)</name>
    <dbReference type="NCBI Taxonomy" id="507522"/>
    <lineage>
        <taxon>Bacteria</taxon>
        <taxon>Pseudomonadati</taxon>
        <taxon>Pseudomonadota</taxon>
        <taxon>Gammaproteobacteria</taxon>
        <taxon>Enterobacterales</taxon>
        <taxon>Enterobacteriaceae</taxon>
        <taxon>Klebsiella/Raoultella group</taxon>
        <taxon>Klebsiella</taxon>
        <taxon>Klebsiella pneumoniae complex</taxon>
    </lineage>
</organism>
<comment type="function">
    <text evidence="1">Binds to the 23S rRNA.</text>
</comment>
<comment type="similarity">
    <text evidence="1">Belongs to the bacterial ribosomal protein bL9 family.</text>
</comment>
<evidence type="ECO:0000255" key="1">
    <source>
        <dbReference type="HAMAP-Rule" id="MF_00503"/>
    </source>
</evidence>
<evidence type="ECO:0000305" key="2"/>
<dbReference type="EMBL" id="CP000964">
    <property type="protein sequence ID" value="ACI08338.1"/>
    <property type="molecule type" value="Genomic_DNA"/>
</dbReference>
<dbReference type="SMR" id="B5Y305"/>
<dbReference type="KEGG" id="kpe:KPK_5071"/>
<dbReference type="HOGENOM" id="CLU_078938_4_1_6"/>
<dbReference type="Proteomes" id="UP000001734">
    <property type="component" value="Chromosome"/>
</dbReference>
<dbReference type="GO" id="GO:1990904">
    <property type="term" value="C:ribonucleoprotein complex"/>
    <property type="evidence" value="ECO:0007669"/>
    <property type="project" value="UniProtKB-KW"/>
</dbReference>
<dbReference type="GO" id="GO:0005840">
    <property type="term" value="C:ribosome"/>
    <property type="evidence" value="ECO:0007669"/>
    <property type="project" value="UniProtKB-KW"/>
</dbReference>
<dbReference type="GO" id="GO:0019843">
    <property type="term" value="F:rRNA binding"/>
    <property type="evidence" value="ECO:0007669"/>
    <property type="project" value="UniProtKB-UniRule"/>
</dbReference>
<dbReference type="GO" id="GO:0003735">
    <property type="term" value="F:structural constituent of ribosome"/>
    <property type="evidence" value="ECO:0007669"/>
    <property type="project" value="InterPro"/>
</dbReference>
<dbReference type="GO" id="GO:0006412">
    <property type="term" value="P:translation"/>
    <property type="evidence" value="ECO:0007669"/>
    <property type="project" value="UniProtKB-UniRule"/>
</dbReference>
<dbReference type="FunFam" id="3.10.430.100:FF:000001">
    <property type="entry name" value="50S ribosomal protein L9"/>
    <property type="match status" value="1"/>
</dbReference>
<dbReference type="FunFam" id="3.40.5.10:FF:000001">
    <property type="entry name" value="50S ribosomal protein L9"/>
    <property type="match status" value="1"/>
</dbReference>
<dbReference type="Gene3D" id="3.10.430.100">
    <property type="entry name" value="Ribosomal protein L9, C-terminal domain"/>
    <property type="match status" value="1"/>
</dbReference>
<dbReference type="Gene3D" id="3.40.5.10">
    <property type="entry name" value="Ribosomal protein L9, N-terminal domain"/>
    <property type="match status" value="1"/>
</dbReference>
<dbReference type="HAMAP" id="MF_00503">
    <property type="entry name" value="Ribosomal_bL9"/>
    <property type="match status" value="1"/>
</dbReference>
<dbReference type="InterPro" id="IPR000244">
    <property type="entry name" value="Ribosomal_bL9"/>
</dbReference>
<dbReference type="InterPro" id="IPR009027">
    <property type="entry name" value="Ribosomal_bL9/RNase_H1_N"/>
</dbReference>
<dbReference type="InterPro" id="IPR020594">
    <property type="entry name" value="Ribosomal_bL9_bac/chp"/>
</dbReference>
<dbReference type="InterPro" id="IPR020069">
    <property type="entry name" value="Ribosomal_bL9_C"/>
</dbReference>
<dbReference type="InterPro" id="IPR036791">
    <property type="entry name" value="Ribosomal_bL9_C_sf"/>
</dbReference>
<dbReference type="InterPro" id="IPR020070">
    <property type="entry name" value="Ribosomal_bL9_N"/>
</dbReference>
<dbReference type="InterPro" id="IPR036935">
    <property type="entry name" value="Ribosomal_bL9_N_sf"/>
</dbReference>
<dbReference type="NCBIfam" id="TIGR00158">
    <property type="entry name" value="L9"/>
    <property type="match status" value="1"/>
</dbReference>
<dbReference type="PANTHER" id="PTHR21368">
    <property type="entry name" value="50S RIBOSOMAL PROTEIN L9"/>
    <property type="match status" value="1"/>
</dbReference>
<dbReference type="Pfam" id="PF03948">
    <property type="entry name" value="Ribosomal_L9_C"/>
    <property type="match status" value="1"/>
</dbReference>
<dbReference type="Pfam" id="PF01281">
    <property type="entry name" value="Ribosomal_L9_N"/>
    <property type="match status" value="1"/>
</dbReference>
<dbReference type="SUPFAM" id="SSF55658">
    <property type="entry name" value="L9 N-domain-like"/>
    <property type="match status" value="1"/>
</dbReference>
<dbReference type="SUPFAM" id="SSF55653">
    <property type="entry name" value="Ribosomal protein L9 C-domain"/>
    <property type="match status" value="1"/>
</dbReference>
<dbReference type="PROSITE" id="PS00651">
    <property type="entry name" value="RIBOSOMAL_L9"/>
    <property type="match status" value="1"/>
</dbReference>
<protein>
    <recommendedName>
        <fullName evidence="1">Large ribosomal subunit protein bL9</fullName>
    </recommendedName>
    <alternativeName>
        <fullName evidence="2">50S ribosomal protein L9</fullName>
    </alternativeName>
</protein>
<gene>
    <name evidence="1" type="primary">rplI</name>
    <name type="ordered locus">KPK_5071</name>
</gene>
<accession>B5Y305</accession>
<name>RL9_KLEP3</name>
<feature type="chain" id="PRO_1000126927" description="Large ribosomal subunit protein bL9">
    <location>
        <begin position="1"/>
        <end position="149"/>
    </location>
</feature>